<protein>
    <recommendedName>
        <fullName evidence="5">Cytochrome P450 monooxygenase hepC</fullName>
        <ecNumber evidence="7">1.-.-.-</ecNumber>
    </recommendedName>
    <alternativeName>
        <fullName evidence="5">Heptelidic acid biosynthesis cluster protein C</fullName>
    </alternativeName>
</protein>
<feature type="chain" id="PRO_0000450829" description="Cytochrome P450 monooxygenase hepC">
    <location>
        <begin position="1"/>
        <end position="509"/>
    </location>
</feature>
<feature type="transmembrane region" description="Helical" evidence="2">
    <location>
        <begin position="5"/>
        <end position="25"/>
    </location>
</feature>
<feature type="binding site" description="axial binding residue" evidence="1">
    <location>
        <position position="454"/>
    </location>
    <ligand>
        <name>heme</name>
        <dbReference type="ChEBI" id="CHEBI:30413"/>
    </ligand>
    <ligandPart>
        <name>Fe</name>
        <dbReference type="ChEBI" id="CHEBI:18248"/>
    </ligandPart>
</feature>
<feature type="glycosylation site" description="N-linked (GlcNAc...) asparagine" evidence="3">
    <location>
        <position position="491"/>
    </location>
</feature>
<dbReference type="EC" id="1.-.-.-" evidence="7"/>
<dbReference type="EMBL" id="BA000055">
    <property type="protein sequence ID" value="BAE64914.1"/>
    <property type="status" value="ALT_SEQ"/>
    <property type="molecule type" value="Genomic_DNA"/>
</dbReference>
<dbReference type="SMR" id="Q2U0K1"/>
<dbReference type="GlyCosmos" id="Q2U0K1">
    <property type="glycosylation" value="1 site, No reported glycans"/>
</dbReference>
<dbReference type="EnsemblFungi" id="BAE64914">
    <property type="protein sequence ID" value="BAE64914"/>
    <property type="gene ID" value="AO090011000410"/>
</dbReference>
<dbReference type="HOGENOM" id="CLU_001570_14_0_1"/>
<dbReference type="Proteomes" id="UP000006564">
    <property type="component" value="Chromosome 7"/>
</dbReference>
<dbReference type="GO" id="GO:0016020">
    <property type="term" value="C:membrane"/>
    <property type="evidence" value="ECO:0007669"/>
    <property type="project" value="UniProtKB-SubCell"/>
</dbReference>
<dbReference type="GO" id="GO:0020037">
    <property type="term" value="F:heme binding"/>
    <property type="evidence" value="ECO:0007669"/>
    <property type="project" value="InterPro"/>
</dbReference>
<dbReference type="GO" id="GO:0005506">
    <property type="term" value="F:iron ion binding"/>
    <property type="evidence" value="ECO:0007669"/>
    <property type="project" value="InterPro"/>
</dbReference>
<dbReference type="GO" id="GO:0004497">
    <property type="term" value="F:monooxygenase activity"/>
    <property type="evidence" value="ECO:0007669"/>
    <property type="project" value="UniProtKB-KW"/>
</dbReference>
<dbReference type="GO" id="GO:0016705">
    <property type="term" value="F:oxidoreductase activity, acting on paired donors, with incorporation or reduction of molecular oxygen"/>
    <property type="evidence" value="ECO:0007669"/>
    <property type="project" value="InterPro"/>
</dbReference>
<dbReference type="CDD" id="cd11060">
    <property type="entry name" value="CYP57A1-like"/>
    <property type="match status" value="1"/>
</dbReference>
<dbReference type="Gene3D" id="1.10.630.10">
    <property type="entry name" value="Cytochrome P450"/>
    <property type="match status" value="1"/>
</dbReference>
<dbReference type="InterPro" id="IPR001128">
    <property type="entry name" value="Cyt_P450"/>
</dbReference>
<dbReference type="InterPro" id="IPR017972">
    <property type="entry name" value="Cyt_P450_CS"/>
</dbReference>
<dbReference type="InterPro" id="IPR002401">
    <property type="entry name" value="Cyt_P450_E_grp-I"/>
</dbReference>
<dbReference type="InterPro" id="IPR036396">
    <property type="entry name" value="Cyt_P450_sf"/>
</dbReference>
<dbReference type="InterPro" id="IPR050121">
    <property type="entry name" value="Cytochrome_P450_monoxygenase"/>
</dbReference>
<dbReference type="PANTHER" id="PTHR24305">
    <property type="entry name" value="CYTOCHROME P450"/>
    <property type="match status" value="1"/>
</dbReference>
<dbReference type="PANTHER" id="PTHR24305:SF232">
    <property type="entry name" value="P450, PUTATIVE (EUROFUNG)-RELATED"/>
    <property type="match status" value="1"/>
</dbReference>
<dbReference type="Pfam" id="PF00067">
    <property type="entry name" value="p450"/>
    <property type="match status" value="1"/>
</dbReference>
<dbReference type="PRINTS" id="PR00463">
    <property type="entry name" value="EP450I"/>
</dbReference>
<dbReference type="PRINTS" id="PR00385">
    <property type="entry name" value="P450"/>
</dbReference>
<dbReference type="SUPFAM" id="SSF48264">
    <property type="entry name" value="Cytochrome P450"/>
    <property type="match status" value="1"/>
</dbReference>
<dbReference type="PROSITE" id="PS00086">
    <property type="entry name" value="CYTOCHROME_P450"/>
    <property type="match status" value="1"/>
</dbReference>
<keyword id="KW-0325">Glycoprotein</keyword>
<keyword id="KW-0349">Heme</keyword>
<keyword id="KW-0408">Iron</keyword>
<keyword id="KW-0472">Membrane</keyword>
<keyword id="KW-0479">Metal-binding</keyword>
<keyword id="KW-0503">Monooxygenase</keyword>
<keyword id="KW-0560">Oxidoreductase</keyword>
<keyword id="KW-1185">Reference proteome</keyword>
<keyword id="KW-0812">Transmembrane</keyword>
<keyword id="KW-1133">Transmembrane helix</keyword>
<organism>
    <name type="scientific">Aspergillus oryzae (strain ATCC 42149 / RIB 40)</name>
    <name type="common">Yellow koji mold</name>
    <dbReference type="NCBI Taxonomy" id="510516"/>
    <lineage>
        <taxon>Eukaryota</taxon>
        <taxon>Fungi</taxon>
        <taxon>Dikarya</taxon>
        <taxon>Ascomycota</taxon>
        <taxon>Pezizomycotina</taxon>
        <taxon>Eurotiomycetes</taxon>
        <taxon>Eurotiomycetidae</taxon>
        <taxon>Eurotiales</taxon>
        <taxon>Aspergillaceae</taxon>
        <taxon>Aspergillus</taxon>
        <taxon>Aspergillus subgen. Circumdati</taxon>
    </lineage>
</organism>
<comment type="function">
    <text evidence="4">Cytochrome P450 monooxygenase; part of the gene cluster that mediates the biosynthesis of heptelidic acid (HA), a sesquiterpene lactone that acts as an inhibitor of glyceraldehyde-3-phosphatedehydrogenase (GAPDH) and a growth inhibitor of the salt-tolerant lactic acid bacteria in soy sauce brewing.</text>
</comment>
<comment type="cofactor">
    <cofactor evidence="1">
        <name>heme</name>
        <dbReference type="ChEBI" id="CHEBI:30413"/>
    </cofactor>
</comment>
<comment type="pathway">
    <text evidence="7">Secondary metabolite biosynthesis.</text>
</comment>
<comment type="subcellular location">
    <subcellularLocation>
        <location evidence="2">Membrane</location>
        <topology evidence="2">Single-pass membrane protein</topology>
    </subcellularLocation>
</comment>
<comment type="disruption phenotype">
    <text evidence="4">Reduces the production of heptelidic acid.</text>
</comment>
<comment type="similarity">
    <text evidence="6">Belongs to the cytochrome P450 family.</text>
</comment>
<comment type="sequence caution" evidence="6">
    <conflict type="erroneous gene model prediction">
        <sequence resource="EMBL-CDS" id="BAE64914"/>
    </conflict>
</comment>
<accession>Q2U0K1</accession>
<gene>
    <name evidence="5" type="primary">hepC</name>
    <name type="ORF">AO090011000410</name>
</gene>
<reference key="1">
    <citation type="journal article" date="2005" name="Nature">
        <title>Genome sequencing and analysis of Aspergillus oryzae.</title>
        <authorList>
            <person name="Machida M."/>
            <person name="Asai K."/>
            <person name="Sano M."/>
            <person name="Tanaka T."/>
            <person name="Kumagai T."/>
            <person name="Terai G."/>
            <person name="Kusumoto K."/>
            <person name="Arima T."/>
            <person name="Akita O."/>
            <person name="Kashiwagi Y."/>
            <person name="Abe K."/>
            <person name="Gomi K."/>
            <person name="Horiuchi H."/>
            <person name="Kitamoto K."/>
            <person name="Kobayashi T."/>
            <person name="Takeuchi M."/>
            <person name="Denning D.W."/>
            <person name="Galagan J.E."/>
            <person name="Nierman W.C."/>
            <person name="Yu J."/>
            <person name="Archer D.B."/>
            <person name="Bennett J.W."/>
            <person name="Bhatnagar D."/>
            <person name="Cleveland T.E."/>
            <person name="Fedorova N.D."/>
            <person name="Gotoh O."/>
            <person name="Horikawa H."/>
            <person name="Hosoyama A."/>
            <person name="Ichinomiya M."/>
            <person name="Igarashi R."/>
            <person name="Iwashita K."/>
            <person name="Juvvadi P.R."/>
            <person name="Kato M."/>
            <person name="Kato Y."/>
            <person name="Kin T."/>
            <person name="Kokubun A."/>
            <person name="Maeda H."/>
            <person name="Maeyama N."/>
            <person name="Maruyama J."/>
            <person name="Nagasaki H."/>
            <person name="Nakajima T."/>
            <person name="Oda K."/>
            <person name="Okada K."/>
            <person name="Paulsen I."/>
            <person name="Sakamoto K."/>
            <person name="Sawano T."/>
            <person name="Takahashi M."/>
            <person name="Takase K."/>
            <person name="Terabayashi Y."/>
            <person name="Wortman J.R."/>
            <person name="Yamada O."/>
            <person name="Yamagata Y."/>
            <person name="Anazawa H."/>
            <person name="Hata Y."/>
            <person name="Koide Y."/>
            <person name="Komori T."/>
            <person name="Koyama Y."/>
            <person name="Minetoki T."/>
            <person name="Suharnan S."/>
            <person name="Tanaka A."/>
            <person name="Isono K."/>
            <person name="Kuhara S."/>
            <person name="Ogasawara N."/>
            <person name="Kikuchi H."/>
        </authorList>
    </citation>
    <scope>NUCLEOTIDE SEQUENCE [LARGE SCALE GENOMIC DNA]</scope>
    <source>
        <strain>ATCC 42149 / RIB 40</strain>
    </source>
</reference>
<reference key="2">
    <citation type="journal article" date="2019" name="Biosci. Biotechnol. Biochem.">
        <title>Identification of a gene cluster for biosynthesis of the sesquiterpene antibiotic, heptelidic acid, in Aspergillus oryzae.</title>
        <authorList>
            <person name="Shinohara Y."/>
            <person name="Nishimura I."/>
            <person name="Koyama Y."/>
        </authorList>
    </citation>
    <scope>FUNCTION</scope>
    <scope>DISRUPTION PHENOTYPE</scope>
    <scope>PATHWAY</scope>
</reference>
<proteinExistence type="inferred from homology"/>
<evidence type="ECO:0000250" key="1">
    <source>
        <dbReference type="UniProtKB" id="P04798"/>
    </source>
</evidence>
<evidence type="ECO:0000255" key="2"/>
<evidence type="ECO:0000255" key="3">
    <source>
        <dbReference type="PROSITE-ProRule" id="PRU00498"/>
    </source>
</evidence>
<evidence type="ECO:0000269" key="4">
    <source>
    </source>
</evidence>
<evidence type="ECO:0000303" key="5">
    <source>
    </source>
</evidence>
<evidence type="ECO:0000305" key="6"/>
<evidence type="ECO:0000305" key="7">
    <source>
    </source>
</evidence>
<sequence length="509" mass="57829">MQQNMIIPSFWTGTAIIGLVACAYVSYQCLLSPLARFPGPFAAKLSKGWRAYKTANGQWHRKLVDLHRKYGHVVRIAPNELSVGDPSSFRKIYSPAEAGNGFNKAACYSVVQGNRPFDLTGERNEKVHSEQRKLVATAYSMSSMVHFESKVNVVIETVIHKLEARCRKTIDLGHWLQMWAFEPTRPLLNSLKPDVIGSVSFSQPFGYVESGDDEGVFKRIQNAMGSAAWLMHAGWLFRLHQKLIPICGNWLAVNDRNGYFFQVACREVSGRINRGGDDKDIIGQLLETQKIKPQLKDLDISFMMTSNVFAGSDSTSIAFQSIFYLLLTHPAAHDRLMRELREREEKGELSDPVSFQEAESWPYLQAIIYEAMRLYAPAAFVLDRVVPPEGMMIEDKFVPGNTVVGSSAWVIHRNPEIWGPDVDTFRPERWLDDSTFLIDKKGALQPFSFGPRNCLGRHLAYQEIKLALAKLVYHFDLELNPKCGDWDEQKNFTFWVKPPLWVNLHPVKS</sequence>
<name>HEPC_ASPOR</name>